<dbReference type="EC" id="3.6.5.4" evidence="1"/>
<dbReference type="EMBL" id="L42023">
    <property type="protein sequence ID" value="AAC22426.1"/>
    <property type="molecule type" value="Genomic_DNA"/>
</dbReference>
<dbReference type="PIR" id="G64091">
    <property type="entry name" value="G64091"/>
</dbReference>
<dbReference type="RefSeq" id="NP_438927.1">
    <property type="nucleotide sequence ID" value="NC_000907.1"/>
</dbReference>
<dbReference type="SMR" id="P44870"/>
<dbReference type="STRING" id="71421.HI_0768"/>
<dbReference type="EnsemblBacteria" id="AAC22426">
    <property type="protein sequence ID" value="AAC22426"/>
    <property type="gene ID" value="HI_0768"/>
</dbReference>
<dbReference type="KEGG" id="hin:HI_0768"/>
<dbReference type="PATRIC" id="fig|71421.8.peg.807"/>
<dbReference type="eggNOG" id="COG0552">
    <property type="taxonomic scope" value="Bacteria"/>
</dbReference>
<dbReference type="HOGENOM" id="CLU_009301_2_0_6"/>
<dbReference type="OrthoDB" id="9804720at2"/>
<dbReference type="PhylomeDB" id="P44870"/>
<dbReference type="BioCyc" id="HINF71421:G1GJ1-808-MONOMER"/>
<dbReference type="Proteomes" id="UP000000579">
    <property type="component" value="Chromosome"/>
</dbReference>
<dbReference type="GO" id="GO:0005737">
    <property type="term" value="C:cytoplasm"/>
    <property type="evidence" value="ECO:0007669"/>
    <property type="project" value="UniProtKB-SubCell"/>
</dbReference>
<dbReference type="GO" id="GO:0005886">
    <property type="term" value="C:plasma membrane"/>
    <property type="evidence" value="ECO:0000318"/>
    <property type="project" value="GO_Central"/>
</dbReference>
<dbReference type="GO" id="GO:0016887">
    <property type="term" value="F:ATP hydrolysis activity"/>
    <property type="evidence" value="ECO:0007669"/>
    <property type="project" value="InterPro"/>
</dbReference>
<dbReference type="GO" id="GO:0005525">
    <property type="term" value="F:GTP binding"/>
    <property type="evidence" value="ECO:0007669"/>
    <property type="project" value="UniProtKB-UniRule"/>
</dbReference>
<dbReference type="GO" id="GO:0003924">
    <property type="term" value="F:GTPase activity"/>
    <property type="evidence" value="ECO:0000318"/>
    <property type="project" value="GO_Central"/>
</dbReference>
<dbReference type="GO" id="GO:0005047">
    <property type="term" value="F:signal recognition particle binding"/>
    <property type="evidence" value="ECO:0000318"/>
    <property type="project" value="GO_Central"/>
</dbReference>
<dbReference type="GO" id="GO:0006605">
    <property type="term" value="P:protein targeting"/>
    <property type="evidence" value="ECO:0000318"/>
    <property type="project" value="GO_Central"/>
</dbReference>
<dbReference type="GO" id="GO:0006614">
    <property type="term" value="P:SRP-dependent cotranslational protein targeting to membrane"/>
    <property type="evidence" value="ECO:0007669"/>
    <property type="project" value="InterPro"/>
</dbReference>
<dbReference type="CDD" id="cd17874">
    <property type="entry name" value="FtsY"/>
    <property type="match status" value="1"/>
</dbReference>
<dbReference type="FunFam" id="1.20.120.140:FF:000002">
    <property type="entry name" value="Signal recognition particle receptor FtsY"/>
    <property type="match status" value="1"/>
</dbReference>
<dbReference type="FunFam" id="3.40.50.300:FF:000053">
    <property type="entry name" value="Signal recognition particle receptor FtsY"/>
    <property type="match status" value="1"/>
</dbReference>
<dbReference type="Gene3D" id="3.40.50.300">
    <property type="entry name" value="P-loop containing nucleotide triphosphate hydrolases"/>
    <property type="match status" value="1"/>
</dbReference>
<dbReference type="Gene3D" id="1.20.120.140">
    <property type="entry name" value="Signal recognition particle SRP54, nucleotide-binding domain"/>
    <property type="match status" value="1"/>
</dbReference>
<dbReference type="HAMAP" id="MF_00920">
    <property type="entry name" value="FtsY"/>
    <property type="match status" value="1"/>
</dbReference>
<dbReference type="InterPro" id="IPR003593">
    <property type="entry name" value="AAA+_ATPase"/>
</dbReference>
<dbReference type="InterPro" id="IPR027417">
    <property type="entry name" value="P-loop_NTPase"/>
</dbReference>
<dbReference type="InterPro" id="IPR013822">
    <property type="entry name" value="Signal_recog_particl_SRP54_hlx"/>
</dbReference>
<dbReference type="InterPro" id="IPR004390">
    <property type="entry name" value="SR_rcpt_FtsY"/>
</dbReference>
<dbReference type="InterPro" id="IPR036225">
    <property type="entry name" value="SRP/SRP_N"/>
</dbReference>
<dbReference type="InterPro" id="IPR000897">
    <property type="entry name" value="SRP54_GTPase_dom"/>
</dbReference>
<dbReference type="InterPro" id="IPR042101">
    <property type="entry name" value="SRP54_N_sf"/>
</dbReference>
<dbReference type="NCBIfam" id="TIGR00064">
    <property type="entry name" value="ftsY"/>
    <property type="match status" value="1"/>
</dbReference>
<dbReference type="PANTHER" id="PTHR43134">
    <property type="entry name" value="SIGNAL RECOGNITION PARTICLE RECEPTOR SUBUNIT ALPHA"/>
    <property type="match status" value="1"/>
</dbReference>
<dbReference type="PANTHER" id="PTHR43134:SF1">
    <property type="entry name" value="SIGNAL RECOGNITION PARTICLE RECEPTOR SUBUNIT ALPHA"/>
    <property type="match status" value="1"/>
</dbReference>
<dbReference type="Pfam" id="PF00448">
    <property type="entry name" value="SRP54"/>
    <property type="match status" value="1"/>
</dbReference>
<dbReference type="Pfam" id="PF02881">
    <property type="entry name" value="SRP54_N"/>
    <property type="match status" value="1"/>
</dbReference>
<dbReference type="SMART" id="SM00382">
    <property type="entry name" value="AAA"/>
    <property type="match status" value="1"/>
</dbReference>
<dbReference type="SMART" id="SM00962">
    <property type="entry name" value="SRP54"/>
    <property type="match status" value="1"/>
</dbReference>
<dbReference type="SMART" id="SM00963">
    <property type="entry name" value="SRP54_N"/>
    <property type="match status" value="1"/>
</dbReference>
<dbReference type="SUPFAM" id="SSF47364">
    <property type="entry name" value="Domain of the SRP/SRP receptor G-proteins"/>
    <property type="match status" value="1"/>
</dbReference>
<dbReference type="SUPFAM" id="SSF52540">
    <property type="entry name" value="P-loop containing nucleoside triphosphate hydrolases"/>
    <property type="match status" value="1"/>
</dbReference>
<dbReference type="PROSITE" id="PS00300">
    <property type="entry name" value="SRP54"/>
    <property type="match status" value="1"/>
</dbReference>
<keyword id="KW-0997">Cell inner membrane</keyword>
<keyword id="KW-1003">Cell membrane</keyword>
<keyword id="KW-0963">Cytoplasm</keyword>
<keyword id="KW-0342">GTP-binding</keyword>
<keyword id="KW-0378">Hydrolase</keyword>
<keyword id="KW-0472">Membrane</keyword>
<keyword id="KW-0547">Nucleotide-binding</keyword>
<keyword id="KW-0675">Receptor</keyword>
<keyword id="KW-1185">Reference proteome</keyword>
<evidence type="ECO:0000255" key="1">
    <source>
        <dbReference type="HAMAP-Rule" id="MF_00920"/>
    </source>
</evidence>
<reference key="1">
    <citation type="journal article" date="1995" name="Science">
        <title>Whole-genome random sequencing and assembly of Haemophilus influenzae Rd.</title>
        <authorList>
            <person name="Fleischmann R.D."/>
            <person name="Adams M.D."/>
            <person name="White O."/>
            <person name="Clayton R.A."/>
            <person name="Kirkness E.F."/>
            <person name="Kerlavage A.R."/>
            <person name="Bult C.J."/>
            <person name="Tomb J.-F."/>
            <person name="Dougherty B.A."/>
            <person name="Merrick J.M."/>
            <person name="McKenney K."/>
            <person name="Sutton G.G."/>
            <person name="FitzHugh W."/>
            <person name="Fields C.A."/>
            <person name="Gocayne J.D."/>
            <person name="Scott J.D."/>
            <person name="Shirley R."/>
            <person name="Liu L.-I."/>
            <person name="Glodek A."/>
            <person name="Kelley J.M."/>
            <person name="Weidman J.F."/>
            <person name="Phillips C.A."/>
            <person name="Spriggs T."/>
            <person name="Hedblom E."/>
            <person name="Cotton M.D."/>
            <person name="Utterback T.R."/>
            <person name="Hanna M.C."/>
            <person name="Nguyen D.T."/>
            <person name="Saudek D.M."/>
            <person name="Brandon R.C."/>
            <person name="Fine L.D."/>
            <person name="Fritchman J.L."/>
            <person name="Fuhrmann J.L."/>
            <person name="Geoghagen N.S.M."/>
            <person name="Gnehm C.L."/>
            <person name="McDonald L.A."/>
            <person name="Small K.V."/>
            <person name="Fraser C.M."/>
            <person name="Smith H.O."/>
            <person name="Venter J.C."/>
        </authorList>
    </citation>
    <scope>NUCLEOTIDE SEQUENCE [LARGE SCALE GENOMIC DNA]</scope>
    <source>
        <strain>ATCC 51907 / DSM 11121 / KW20 / Rd</strain>
    </source>
</reference>
<organism>
    <name type="scientific">Haemophilus influenzae (strain ATCC 51907 / DSM 11121 / KW20 / Rd)</name>
    <dbReference type="NCBI Taxonomy" id="71421"/>
    <lineage>
        <taxon>Bacteria</taxon>
        <taxon>Pseudomonadati</taxon>
        <taxon>Pseudomonadota</taxon>
        <taxon>Gammaproteobacteria</taxon>
        <taxon>Pasteurellales</taxon>
        <taxon>Pasteurellaceae</taxon>
        <taxon>Haemophilus</taxon>
    </lineage>
</organism>
<protein>
    <recommendedName>
        <fullName evidence="1">Signal recognition particle receptor FtsY</fullName>
        <shortName evidence="1">SRP receptor</shortName>
        <ecNumber evidence="1">3.6.5.4</ecNumber>
    </recommendedName>
</protein>
<name>FTSY_HAEIN</name>
<sequence length="414" mass="46147">MNDIFIGLQLREHFMAEENKKGGFWASLFGRNKKQDEPKIEPIIEEEKIKDIEPSIEKFEANDLVEEEKIQEISTALEPIEEIIEAKNLEDEFQPVVEIETREKPSEGGFFSRLVKGLLKTKQNIGAGFRGFFLGKKIDDELFEELEEQLLIADIGVPTTSKIIKNLTEHASRKELQDAELLYQQLKVEMADILEPVAQPLEIDSTKKPYVILMVGVNGVGKTTTIGKLARKFQAEGKSVMLAAGDTFRAAAVEQLQVWGERNHIPVVAQSTGSDSASVIFDAMQSAAARNIDILIADTAGRLQNKNNLMDELKKIVRVMKKYDETAPHEIMLTLDAGTGQNAISQAKLFNEAVGLTGISLTKLDGTAKGGVIFAIADQFKLPIRYIGVGEKIEDLREFNAKEFIEALFVHEEE</sequence>
<gene>
    <name evidence="1" type="primary">ftsY</name>
    <name type="ordered locus">HI_0768</name>
</gene>
<proteinExistence type="inferred from homology"/>
<feature type="chain" id="PRO_0000101132" description="Signal recognition particle receptor FtsY">
    <location>
        <begin position="1"/>
        <end position="414"/>
    </location>
</feature>
<feature type="binding site" evidence="1">
    <location>
        <begin position="216"/>
        <end position="223"/>
    </location>
    <ligand>
        <name>GTP</name>
        <dbReference type="ChEBI" id="CHEBI:37565"/>
    </ligand>
</feature>
<feature type="binding site" evidence="1">
    <location>
        <begin position="298"/>
        <end position="302"/>
    </location>
    <ligand>
        <name>GTP</name>
        <dbReference type="ChEBI" id="CHEBI:37565"/>
    </ligand>
</feature>
<feature type="binding site" evidence="1">
    <location>
        <begin position="362"/>
        <end position="365"/>
    </location>
    <ligand>
        <name>GTP</name>
        <dbReference type="ChEBI" id="CHEBI:37565"/>
    </ligand>
</feature>
<comment type="function">
    <text evidence="1">Involved in targeting and insertion of nascent membrane proteins into the cytoplasmic membrane. Acts as a receptor for the complex formed by the signal recognition particle (SRP) and the ribosome-nascent chain (RNC). Interaction with SRP-RNC leads to the transfer of the RNC complex to the Sec translocase for insertion into the membrane, the hydrolysis of GTP by both Ffh and FtsY, and the dissociation of the SRP-FtsY complex into the individual components.</text>
</comment>
<comment type="catalytic activity">
    <reaction evidence="1">
        <text>GTP + H2O = GDP + phosphate + H(+)</text>
        <dbReference type="Rhea" id="RHEA:19669"/>
        <dbReference type="ChEBI" id="CHEBI:15377"/>
        <dbReference type="ChEBI" id="CHEBI:15378"/>
        <dbReference type="ChEBI" id="CHEBI:37565"/>
        <dbReference type="ChEBI" id="CHEBI:43474"/>
        <dbReference type="ChEBI" id="CHEBI:58189"/>
        <dbReference type="EC" id="3.6.5.4"/>
    </reaction>
</comment>
<comment type="subunit">
    <text evidence="1">Part of the signal recognition particle protein translocation system, which is composed of SRP and FtsY. SRP is a ribonucleoprotein composed of Ffh and a 4.5S RNA molecule.</text>
</comment>
<comment type="subcellular location">
    <subcellularLocation>
        <location>Cell inner membrane</location>
        <topology>Peripheral membrane protein</topology>
        <orientation>Cytoplasmic side</orientation>
    </subcellularLocation>
    <subcellularLocation>
        <location evidence="1">Cytoplasm</location>
    </subcellularLocation>
</comment>
<comment type="similarity">
    <text evidence="1">Belongs to the GTP-binding SRP family. FtsY subfamily.</text>
</comment>
<accession>P44870</accession>